<keyword id="KW-0106">Calcium</keyword>
<keyword id="KW-0903">Direct protein sequencing</keyword>
<keyword id="KW-0256">Endoplasmic reticulum</keyword>
<keyword id="KW-0325">Glycoprotein</keyword>
<keyword id="KW-0479">Metal-binding</keyword>
<keyword id="KW-0597">Phosphoprotein</keyword>
<keyword id="KW-1185">Reference proteome</keyword>
<keyword id="KW-0677">Repeat</keyword>
<keyword id="KW-0732">Signal</keyword>
<gene>
    <name type="primary">Rcn1</name>
    <name type="synonym">Rca1</name>
    <name type="synonym">Rcn</name>
</gene>
<reference key="1">
    <citation type="journal article" date="1993" name="J. Biol. Chem.">
        <title>Reticulocalbin, a novel endoplasmic reticulum resident Ca(2+)-binding protein with multiple EF-hand motifs and a carboxyl-terminal HDEL sequence.</title>
        <authorList>
            <person name="Ozawa M."/>
            <person name="Muramatsu T."/>
        </authorList>
    </citation>
    <scope>NUCLEOTIDE SEQUENCE [MRNA]</scope>
</reference>
<reference key="2">
    <citation type="journal article" date="1995" name="J. Biochem.">
        <title>Structure of the gene encoding mouse reticulocalbin, a novel endoplasmic reticulum-resident Ca(2+)-binding protein with multiple EF-hand motifs.</title>
        <authorList>
            <person name="Ozawa M."/>
        </authorList>
    </citation>
    <scope>NUCLEOTIDE SEQUENCE [GENOMIC DNA]</scope>
    <source>
        <strain>129/Sv</strain>
        <tissue>Liver</tissue>
    </source>
</reference>
<reference key="3">
    <citation type="journal article" date="2004" name="Genome Res.">
        <title>The status, quality, and expansion of the NIH full-length cDNA project: the Mammalian Gene Collection (MGC).</title>
        <authorList>
            <consortium name="The MGC Project Team"/>
        </authorList>
    </citation>
    <scope>NUCLEOTIDE SEQUENCE [LARGE SCALE MRNA]</scope>
    <source>
        <strain>C57BL/6J</strain>
    </source>
</reference>
<reference key="4">
    <citation type="journal article" date="2005" name="Science">
        <title>The transcriptional landscape of the mammalian genome.</title>
        <authorList>
            <person name="Carninci P."/>
            <person name="Kasukawa T."/>
            <person name="Katayama S."/>
            <person name="Gough J."/>
            <person name="Frith M.C."/>
            <person name="Maeda N."/>
            <person name="Oyama R."/>
            <person name="Ravasi T."/>
            <person name="Lenhard B."/>
            <person name="Wells C."/>
            <person name="Kodzius R."/>
            <person name="Shimokawa K."/>
            <person name="Bajic V.B."/>
            <person name="Brenner S.E."/>
            <person name="Batalov S."/>
            <person name="Forrest A.R."/>
            <person name="Zavolan M."/>
            <person name="Davis M.J."/>
            <person name="Wilming L.G."/>
            <person name="Aidinis V."/>
            <person name="Allen J.E."/>
            <person name="Ambesi-Impiombato A."/>
            <person name="Apweiler R."/>
            <person name="Aturaliya R.N."/>
            <person name="Bailey T.L."/>
            <person name="Bansal M."/>
            <person name="Baxter L."/>
            <person name="Beisel K.W."/>
            <person name="Bersano T."/>
            <person name="Bono H."/>
            <person name="Chalk A.M."/>
            <person name="Chiu K.P."/>
            <person name="Choudhary V."/>
            <person name="Christoffels A."/>
            <person name="Clutterbuck D.R."/>
            <person name="Crowe M.L."/>
            <person name="Dalla E."/>
            <person name="Dalrymple B.P."/>
            <person name="de Bono B."/>
            <person name="Della Gatta G."/>
            <person name="di Bernardo D."/>
            <person name="Down T."/>
            <person name="Engstrom P."/>
            <person name="Fagiolini M."/>
            <person name="Faulkner G."/>
            <person name="Fletcher C.F."/>
            <person name="Fukushima T."/>
            <person name="Furuno M."/>
            <person name="Futaki S."/>
            <person name="Gariboldi M."/>
            <person name="Georgii-Hemming P."/>
            <person name="Gingeras T.R."/>
            <person name="Gojobori T."/>
            <person name="Green R.E."/>
            <person name="Gustincich S."/>
            <person name="Harbers M."/>
            <person name="Hayashi Y."/>
            <person name="Hensch T.K."/>
            <person name="Hirokawa N."/>
            <person name="Hill D."/>
            <person name="Huminiecki L."/>
            <person name="Iacono M."/>
            <person name="Ikeo K."/>
            <person name="Iwama A."/>
            <person name="Ishikawa T."/>
            <person name="Jakt M."/>
            <person name="Kanapin A."/>
            <person name="Katoh M."/>
            <person name="Kawasawa Y."/>
            <person name="Kelso J."/>
            <person name="Kitamura H."/>
            <person name="Kitano H."/>
            <person name="Kollias G."/>
            <person name="Krishnan S.P."/>
            <person name="Kruger A."/>
            <person name="Kummerfeld S.K."/>
            <person name="Kurochkin I.V."/>
            <person name="Lareau L.F."/>
            <person name="Lazarevic D."/>
            <person name="Lipovich L."/>
            <person name="Liu J."/>
            <person name="Liuni S."/>
            <person name="McWilliam S."/>
            <person name="Madan Babu M."/>
            <person name="Madera M."/>
            <person name="Marchionni L."/>
            <person name="Matsuda H."/>
            <person name="Matsuzawa S."/>
            <person name="Miki H."/>
            <person name="Mignone F."/>
            <person name="Miyake S."/>
            <person name="Morris K."/>
            <person name="Mottagui-Tabar S."/>
            <person name="Mulder N."/>
            <person name="Nakano N."/>
            <person name="Nakauchi H."/>
            <person name="Ng P."/>
            <person name="Nilsson R."/>
            <person name="Nishiguchi S."/>
            <person name="Nishikawa S."/>
            <person name="Nori F."/>
            <person name="Ohara O."/>
            <person name="Okazaki Y."/>
            <person name="Orlando V."/>
            <person name="Pang K.C."/>
            <person name="Pavan W.J."/>
            <person name="Pavesi G."/>
            <person name="Pesole G."/>
            <person name="Petrovsky N."/>
            <person name="Piazza S."/>
            <person name="Reed J."/>
            <person name="Reid J.F."/>
            <person name="Ring B.Z."/>
            <person name="Ringwald M."/>
            <person name="Rost B."/>
            <person name="Ruan Y."/>
            <person name="Salzberg S.L."/>
            <person name="Sandelin A."/>
            <person name="Schneider C."/>
            <person name="Schoenbach C."/>
            <person name="Sekiguchi K."/>
            <person name="Semple C.A."/>
            <person name="Seno S."/>
            <person name="Sessa L."/>
            <person name="Sheng Y."/>
            <person name="Shibata Y."/>
            <person name="Shimada H."/>
            <person name="Shimada K."/>
            <person name="Silva D."/>
            <person name="Sinclair B."/>
            <person name="Sperling S."/>
            <person name="Stupka E."/>
            <person name="Sugiura K."/>
            <person name="Sultana R."/>
            <person name="Takenaka Y."/>
            <person name="Taki K."/>
            <person name="Tammoja K."/>
            <person name="Tan S.L."/>
            <person name="Tang S."/>
            <person name="Taylor M.S."/>
            <person name="Tegner J."/>
            <person name="Teichmann S.A."/>
            <person name="Ueda H.R."/>
            <person name="van Nimwegen E."/>
            <person name="Verardo R."/>
            <person name="Wei C.L."/>
            <person name="Yagi K."/>
            <person name="Yamanishi H."/>
            <person name="Zabarovsky E."/>
            <person name="Zhu S."/>
            <person name="Zimmer A."/>
            <person name="Hide W."/>
            <person name="Bult C."/>
            <person name="Grimmond S.M."/>
            <person name="Teasdale R.D."/>
            <person name="Liu E.T."/>
            <person name="Brusic V."/>
            <person name="Quackenbush J."/>
            <person name="Wahlestedt C."/>
            <person name="Mattick J.S."/>
            <person name="Hume D.A."/>
            <person name="Kai C."/>
            <person name="Sasaki D."/>
            <person name="Tomaru Y."/>
            <person name="Fukuda S."/>
            <person name="Kanamori-Katayama M."/>
            <person name="Suzuki M."/>
            <person name="Aoki J."/>
            <person name="Arakawa T."/>
            <person name="Iida J."/>
            <person name="Imamura K."/>
            <person name="Itoh M."/>
            <person name="Kato T."/>
            <person name="Kawaji H."/>
            <person name="Kawagashira N."/>
            <person name="Kawashima T."/>
            <person name="Kojima M."/>
            <person name="Kondo S."/>
            <person name="Konno H."/>
            <person name="Nakano K."/>
            <person name="Ninomiya N."/>
            <person name="Nishio T."/>
            <person name="Okada M."/>
            <person name="Plessy C."/>
            <person name="Shibata K."/>
            <person name="Shiraki T."/>
            <person name="Suzuki S."/>
            <person name="Tagami M."/>
            <person name="Waki K."/>
            <person name="Watahiki A."/>
            <person name="Okamura-Oho Y."/>
            <person name="Suzuki H."/>
            <person name="Kawai J."/>
            <person name="Hayashizaki Y."/>
        </authorList>
    </citation>
    <scope>NUCLEOTIDE SEQUENCE [LARGE SCALE MRNA]</scope>
    <source>
        <strain>C57BL/6J</strain>
    </source>
</reference>
<reference key="5">
    <citation type="journal article" date="1994" name="Electrophoresis">
        <title>Separation and sequencing of familiar and novel murine proteins using preparative two-dimensional gel electrophoresis.</title>
        <authorList>
            <person name="Merrick B.A."/>
            <person name="Patterson R.M."/>
            <person name="Wichter L.L."/>
            <person name="He C."/>
            <person name="Selkirk J.K."/>
        </authorList>
    </citation>
    <scope>PROTEIN SEQUENCE OF 24-39</scope>
    <source>
        <tissue>Fibroblast</tissue>
    </source>
</reference>
<reference key="6">
    <citation type="journal article" date="2010" name="Cell">
        <title>A tissue-specific atlas of mouse protein phosphorylation and expression.</title>
        <authorList>
            <person name="Huttlin E.L."/>
            <person name="Jedrychowski M.P."/>
            <person name="Elias J.E."/>
            <person name="Goswami T."/>
            <person name="Rad R."/>
            <person name="Beausoleil S.A."/>
            <person name="Villen J."/>
            <person name="Haas W."/>
            <person name="Sowa M.E."/>
            <person name="Gygi S.P."/>
        </authorList>
    </citation>
    <scope>IDENTIFICATION BY MASS SPECTROMETRY [LARGE SCALE ANALYSIS]</scope>
    <source>
        <tissue>Brain</tissue>
        <tissue>Heart</tissue>
        <tissue>Kidney</tissue>
        <tissue>Liver</tissue>
        <tissue>Lung</tissue>
        <tissue>Pancreas</tissue>
        <tissue>Spleen</tissue>
        <tissue>Testis</tissue>
    </source>
</reference>
<sequence>MARGGRLGLALGLLLALVLALRAKPTVRKERVVRPDSELGERPPEDNQSFQYDHEAFLGKEDSKTFDQLSPDESKERLGKIVDRIDSDGDGLVTTEELKLWIKRVQKRYIYDNVAKVWKDYDRDKDEKISWEEYKQATYGYYLGNPAEFHDSSDHHTFKKMLPRDERRFKASDLDGDLTATREEFTAFLHPEEFEHMKEIVVLETLEDIDKNGDGFVDQDEYIADMFSHEDNGPEPDWVLSEREQFNDFRDLNKDGKLDKDEIRHWILPQDYDHAQAEARHLVYESDKNKDEMLTKEEILDNWNMFVGSQATNYGEDLTKNHDEL</sequence>
<accession>Q05186</accession>
<accession>Q3TVU3</accession>
<proteinExistence type="evidence at protein level"/>
<protein>
    <recommendedName>
        <fullName>Reticulocalbin-1</fullName>
    </recommendedName>
</protein>
<organism>
    <name type="scientific">Mus musculus</name>
    <name type="common">Mouse</name>
    <dbReference type="NCBI Taxonomy" id="10090"/>
    <lineage>
        <taxon>Eukaryota</taxon>
        <taxon>Metazoa</taxon>
        <taxon>Chordata</taxon>
        <taxon>Craniata</taxon>
        <taxon>Vertebrata</taxon>
        <taxon>Euteleostomi</taxon>
        <taxon>Mammalia</taxon>
        <taxon>Eutheria</taxon>
        <taxon>Euarchontoglires</taxon>
        <taxon>Glires</taxon>
        <taxon>Rodentia</taxon>
        <taxon>Myomorpha</taxon>
        <taxon>Muroidea</taxon>
        <taxon>Muridae</taxon>
        <taxon>Murinae</taxon>
        <taxon>Mus</taxon>
        <taxon>Mus</taxon>
    </lineage>
</organism>
<feature type="signal peptide" evidence="3">
    <location>
        <begin position="1"/>
        <end position="23"/>
    </location>
</feature>
<feature type="chain" id="PRO_0000004146" description="Reticulocalbin-1">
    <location>
        <begin position="24"/>
        <end position="325"/>
    </location>
</feature>
<feature type="domain" description="EF-hand 1" evidence="2">
    <location>
        <begin position="73"/>
        <end position="108"/>
    </location>
</feature>
<feature type="domain" description="EF-hand 2" evidence="2">
    <location>
        <begin position="109"/>
        <end position="144"/>
    </location>
</feature>
<feature type="domain" description="EF-hand 3" evidence="2">
    <location>
        <begin position="160"/>
        <end position="195"/>
    </location>
</feature>
<feature type="domain" description="EF-hand 4" evidence="2">
    <location>
        <begin position="197"/>
        <end position="232"/>
    </location>
</feature>
<feature type="domain" description="EF-hand 5" evidence="2">
    <location>
        <begin position="238"/>
        <end position="273"/>
    </location>
</feature>
<feature type="domain" description="EF-hand 6" evidence="2">
    <location>
        <begin position="274"/>
        <end position="309"/>
    </location>
</feature>
<feature type="short sequence motif" description="Prevents secretion from ER">
    <location>
        <begin position="322"/>
        <end position="325"/>
    </location>
</feature>
<feature type="binding site" evidence="2">
    <location>
        <position position="86"/>
    </location>
    <ligand>
        <name>Ca(2+)</name>
        <dbReference type="ChEBI" id="CHEBI:29108"/>
        <label>1</label>
    </ligand>
</feature>
<feature type="binding site" evidence="2">
    <location>
        <position position="88"/>
    </location>
    <ligand>
        <name>Ca(2+)</name>
        <dbReference type="ChEBI" id="CHEBI:29108"/>
        <label>1</label>
    </ligand>
</feature>
<feature type="binding site" evidence="2">
    <location>
        <position position="90"/>
    </location>
    <ligand>
        <name>Ca(2+)</name>
        <dbReference type="ChEBI" id="CHEBI:29108"/>
        <label>1</label>
    </ligand>
</feature>
<feature type="binding site" evidence="2">
    <location>
        <position position="97"/>
    </location>
    <ligand>
        <name>Ca(2+)</name>
        <dbReference type="ChEBI" id="CHEBI:29108"/>
        <label>1</label>
    </ligand>
</feature>
<feature type="binding site" evidence="4">
    <location>
        <position position="122"/>
    </location>
    <ligand>
        <name>Ca(2+)</name>
        <dbReference type="ChEBI" id="CHEBI:29108"/>
        <label>2</label>
    </ligand>
</feature>
<feature type="binding site" evidence="4">
    <location>
        <position position="124"/>
    </location>
    <ligand>
        <name>Ca(2+)</name>
        <dbReference type="ChEBI" id="CHEBI:29108"/>
        <label>2</label>
    </ligand>
</feature>
<feature type="binding site" evidence="4">
    <location>
        <position position="126"/>
    </location>
    <ligand>
        <name>Ca(2+)</name>
        <dbReference type="ChEBI" id="CHEBI:29108"/>
        <label>2</label>
    </ligand>
</feature>
<feature type="binding site" evidence="4">
    <location>
        <position position="128"/>
    </location>
    <ligand>
        <name>Ca(2+)</name>
        <dbReference type="ChEBI" id="CHEBI:29108"/>
        <label>2</label>
    </ligand>
</feature>
<feature type="binding site" evidence="4">
    <location>
        <position position="133"/>
    </location>
    <ligand>
        <name>Ca(2+)</name>
        <dbReference type="ChEBI" id="CHEBI:29108"/>
        <label>2</label>
    </ligand>
</feature>
<feature type="binding site" evidence="4">
    <location>
        <position position="173"/>
    </location>
    <ligand>
        <name>Ca(2+)</name>
        <dbReference type="ChEBI" id="CHEBI:29108"/>
        <label>3</label>
    </ligand>
</feature>
<feature type="binding site" evidence="4">
    <location>
        <position position="175"/>
    </location>
    <ligand>
        <name>Ca(2+)</name>
        <dbReference type="ChEBI" id="CHEBI:29108"/>
        <label>3</label>
    </ligand>
</feature>
<feature type="binding site" evidence="4">
    <location>
        <position position="177"/>
    </location>
    <ligand>
        <name>Ca(2+)</name>
        <dbReference type="ChEBI" id="CHEBI:29108"/>
        <label>3</label>
    </ligand>
</feature>
<feature type="binding site" evidence="4">
    <location>
        <position position="179"/>
    </location>
    <ligand>
        <name>Ca(2+)</name>
        <dbReference type="ChEBI" id="CHEBI:29108"/>
        <label>3</label>
    </ligand>
</feature>
<feature type="binding site" evidence="4">
    <location>
        <position position="184"/>
    </location>
    <ligand>
        <name>Ca(2+)</name>
        <dbReference type="ChEBI" id="CHEBI:29108"/>
        <label>3</label>
    </ligand>
</feature>
<feature type="binding site" evidence="2">
    <location>
        <position position="210"/>
    </location>
    <ligand>
        <name>Ca(2+)</name>
        <dbReference type="ChEBI" id="CHEBI:29108"/>
        <label>4</label>
    </ligand>
</feature>
<feature type="binding site" evidence="2">
    <location>
        <position position="212"/>
    </location>
    <ligand>
        <name>Ca(2+)</name>
        <dbReference type="ChEBI" id="CHEBI:29108"/>
        <label>4</label>
    </ligand>
</feature>
<feature type="binding site" evidence="2">
    <location>
        <position position="214"/>
    </location>
    <ligand>
        <name>Ca(2+)</name>
        <dbReference type="ChEBI" id="CHEBI:29108"/>
        <label>4</label>
    </ligand>
</feature>
<feature type="binding site" evidence="2">
    <location>
        <position position="221"/>
    </location>
    <ligand>
        <name>Ca(2+)</name>
        <dbReference type="ChEBI" id="CHEBI:29108"/>
        <label>4</label>
    </ligand>
</feature>
<feature type="binding site" evidence="2">
    <location>
        <position position="251"/>
    </location>
    <ligand>
        <name>Ca(2+)</name>
        <dbReference type="ChEBI" id="CHEBI:29108"/>
        <label>5</label>
    </ligand>
</feature>
<feature type="binding site" evidence="2">
    <location>
        <position position="253"/>
    </location>
    <ligand>
        <name>Ca(2+)</name>
        <dbReference type="ChEBI" id="CHEBI:29108"/>
        <label>5</label>
    </ligand>
</feature>
<feature type="binding site" evidence="2">
    <location>
        <position position="255"/>
    </location>
    <ligand>
        <name>Ca(2+)</name>
        <dbReference type="ChEBI" id="CHEBI:29108"/>
        <label>5</label>
    </ligand>
</feature>
<feature type="binding site" evidence="2">
    <location>
        <position position="257"/>
    </location>
    <ligand>
        <name>Ca(2+)</name>
        <dbReference type="ChEBI" id="CHEBI:29108"/>
        <label>5</label>
    </ligand>
</feature>
<feature type="binding site" evidence="2">
    <location>
        <position position="262"/>
    </location>
    <ligand>
        <name>Ca(2+)</name>
        <dbReference type="ChEBI" id="CHEBI:29108"/>
        <label>5</label>
    </ligand>
</feature>
<feature type="binding site" evidence="4">
    <location>
        <position position="287"/>
    </location>
    <ligand>
        <name>Ca(2+)</name>
        <dbReference type="ChEBI" id="CHEBI:29108"/>
        <label>6</label>
    </ligand>
</feature>
<feature type="binding site" evidence="4">
    <location>
        <position position="289"/>
    </location>
    <ligand>
        <name>Ca(2+)</name>
        <dbReference type="ChEBI" id="CHEBI:29108"/>
        <label>6</label>
    </ligand>
</feature>
<feature type="binding site" evidence="4">
    <location>
        <position position="291"/>
    </location>
    <ligand>
        <name>Ca(2+)</name>
        <dbReference type="ChEBI" id="CHEBI:29108"/>
        <label>6</label>
    </ligand>
</feature>
<feature type="binding site" evidence="4">
    <location>
        <position position="293"/>
    </location>
    <ligand>
        <name>Ca(2+)</name>
        <dbReference type="ChEBI" id="CHEBI:29108"/>
        <label>6</label>
    </ligand>
</feature>
<feature type="binding site" evidence="4">
    <location>
        <position position="298"/>
    </location>
    <ligand>
        <name>Ca(2+)</name>
        <dbReference type="ChEBI" id="CHEBI:29108"/>
        <label>6</label>
    </ligand>
</feature>
<feature type="modified residue" description="Phosphoserine" evidence="1">
    <location>
        <position position="49"/>
    </location>
</feature>
<feature type="modified residue" description="Phosphoserine" evidence="1">
    <location>
        <position position="74"/>
    </location>
</feature>
<feature type="glycosylation site" description="N-linked (GlcNAc...) asparagine; partial">
    <location>
        <position position="47"/>
    </location>
</feature>
<feature type="sequence conflict" description="In Ref. 5; AA sequence." evidence="4" ref="5">
    <original>K</original>
    <variation>G</variation>
    <location>
        <position position="24"/>
    </location>
</feature>
<feature type="sequence conflict" description="In Ref. 5; AA sequence." evidence="4" ref="5">
    <original>R</original>
    <variation>I</variation>
    <location>
        <position position="34"/>
    </location>
</feature>
<feature type="sequence conflict" description="In Ref. 5; AA sequence." evidence="4" ref="5">
    <original>SEL</original>
    <variation>DEE</variation>
    <location>
        <begin position="37"/>
        <end position="39"/>
    </location>
</feature>
<name>RCN1_MOUSE</name>
<evidence type="ECO:0000250" key="1">
    <source>
        <dbReference type="UniProtKB" id="Q15293"/>
    </source>
</evidence>
<evidence type="ECO:0000255" key="2">
    <source>
        <dbReference type="PROSITE-ProRule" id="PRU00448"/>
    </source>
</evidence>
<evidence type="ECO:0000269" key="3">
    <source>
    </source>
</evidence>
<evidence type="ECO:0000305" key="4"/>
<comment type="function">
    <text>May regulate calcium-dependent activities in the endoplasmic reticulum lumen or post-ER compartment.</text>
</comment>
<comment type="subcellular location">
    <subcellularLocation>
        <location>Endoplasmic reticulum lumen</location>
    </subcellularLocation>
</comment>
<comment type="PTM">
    <text evidence="1">O-glycosylated. O-mannosylated by POMT1 and POMT2 and elongated by POMGNT1.</text>
</comment>
<comment type="miscellaneous">
    <text>This protein has four functional calcium-binding sites; potential sites II and VI have lost affinity for calcium.</text>
</comment>
<comment type="similarity">
    <text evidence="4">Belongs to the CREC family.</text>
</comment>
<dbReference type="EMBL" id="D13003">
    <property type="protein sequence ID" value="BAA02366.1"/>
    <property type="molecule type" value="mRNA"/>
</dbReference>
<dbReference type="EMBL" id="D43956">
    <property type="protein sequence ID" value="BAA07896.1"/>
    <property type="molecule type" value="Genomic_DNA"/>
</dbReference>
<dbReference type="EMBL" id="BC049108">
    <property type="protein sequence ID" value="AAH49108.1"/>
    <property type="molecule type" value="mRNA"/>
</dbReference>
<dbReference type="EMBL" id="AK017494">
    <property type="protein sequence ID" value="BAB30773.1"/>
    <property type="molecule type" value="mRNA"/>
</dbReference>
<dbReference type="EMBL" id="AK133971">
    <property type="protein sequence ID" value="BAE21962.1"/>
    <property type="molecule type" value="mRNA"/>
</dbReference>
<dbReference type="EMBL" id="AK159973">
    <property type="protein sequence ID" value="BAE35525.1"/>
    <property type="molecule type" value="mRNA"/>
</dbReference>
<dbReference type="CCDS" id="CCDS16498.1"/>
<dbReference type="PIR" id="A45337">
    <property type="entry name" value="A45337"/>
</dbReference>
<dbReference type="RefSeq" id="NP_033063.1">
    <property type="nucleotide sequence ID" value="NM_009037.2"/>
</dbReference>
<dbReference type="BioGRID" id="202839">
    <property type="interactions" value="8"/>
</dbReference>
<dbReference type="FunCoup" id="Q05186">
    <property type="interactions" value="1771"/>
</dbReference>
<dbReference type="STRING" id="10090.ENSMUSP00000006128"/>
<dbReference type="GlyConnect" id="2679">
    <property type="glycosylation" value="12 N-Linked glycans (1 site)"/>
</dbReference>
<dbReference type="GlyCosmos" id="Q05186">
    <property type="glycosylation" value="1 site, 11 glycans"/>
</dbReference>
<dbReference type="GlyGen" id="Q05186">
    <property type="glycosylation" value="1 site, 12 N-linked glycans (1 site)"/>
</dbReference>
<dbReference type="iPTMnet" id="Q05186"/>
<dbReference type="PhosphoSitePlus" id="Q05186"/>
<dbReference type="REPRODUCTION-2DPAGE" id="IPI00137831"/>
<dbReference type="jPOST" id="Q05186"/>
<dbReference type="PaxDb" id="10090-ENSMUSP00000006128"/>
<dbReference type="PeptideAtlas" id="Q05186"/>
<dbReference type="ProteomicsDB" id="255056"/>
<dbReference type="Pumba" id="Q05186"/>
<dbReference type="Antibodypedia" id="25609">
    <property type="antibodies" value="137 antibodies from 23 providers"/>
</dbReference>
<dbReference type="DNASU" id="19672"/>
<dbReference type="Ensembl" id="ENSMUST00000006128.7">
    <property type="protein sequence ID" value="ENSMUSP00000006128.7"/>
    <property type="gene ID" value="ENSMUSG00000005973.7"/>
</dbReference>
<dbReference type="GeneID" id="19672"/>
<dbReference type="KEGG" id="mmu:19672"/>
<dbReference type="UCSC" id="uc008lks.1">
    <property type="organism name" value="mouse"/>
</dbReference>
<dbReference type="AGR" id="MGI:104559"/>
<dbReference type="CTD" id="5954"/>
<dbReference type="MGI" id="MGI:104559">
    <property type="gene designation" value="Rcn1"/>
</dbReference>
<dbReference type="VEuPathDB" id="HostDB:ENSMUSG00000005973"/>
<dbReference type="eggNOG" id="KOG4223">
    <property type="taxonomic scope" value="Eukaryota"/>
</dbReference>
<dbReference type="GeneTree" id="ENSGT01010000222360"/>
<dbReference type="HOGENOM" id="CLU_044718_0_1_1"/>
<dbReference type="InParanoid" id="Q05186"/>
<dbReference type="OMA" id="DRPGFQY"/>
<dbReference type="OrthoDB" id="293868at2759"/>
<dbReference type="PhylomeDB" id="Q05186"/>
<dbReference type="TreeFam" id="TF314849"/>
<dbReference type="Reactome" id="R-MMU-381426">
    <property type="pathway name" value="Regulation of Insulin-like Growth Factor (IGF) transport and uptake by Insulin-like Growth Factor Binding Proteins (IGFBPs)"/>
</dbReference>
<dbReference type="Reactome" id="R-MMU-8957275">
    <property type="pathway name" value="Post-translational protein phosphorylation"/>
</dbReference>
<dbReference type="BioGRID-ORCS" id="19672">
    <property type="hits" value="4 hits in 78 CRISPR screens"/>
</dbReference>
<dbReference type="ChiTaRS" id="Rcn1">
    <property type="organism name" value="mouse"/>
</dbReference>
<dbReference type="PRO" id="PR:Q05186"/>
<dbReference type="Proteomes" id="UP000000589">
    <property type="component" value="Chromosome 2"/>
</dbReference>
<dbReference type="RNAct" id="Q05186">
    <property type="molecule type" value="protein"/>
</dbReference>
<dbReference type="Bgee" id="ENSMUSG00000005973">
    <property type="expression patterns" value="Expressed in seminal vesicle and 262 other cell types or tissues"/>
</dbReference>
<dbReference type="GO" id="GO:0005788">
    <property type="term" value="C:endoplasmic reticulum lumen"/>
    <property type="evidence" value="ECO:0007669"/>
    <property type="project" value="UniProtKB-SubCell"/>
</dbReference>
<dbReference type="GO" id="GO:0005509">
    <property type="term" value="F:calcium ion binding"/>
    <property type="evidence" value="ECO:0007669"/>
    <property type="project" value="InterPro"/>
</dbReference>
<dbReference type="GO" id="GO:0043010">
    <property type="term" value="P:camera-type eye development"/>
    <property type="evidence" value="ECO:0000315"/>
    <property type="project" value="MGI"/>
</dbReference>
<dbReference type="GO" id="GO:0001701">
    <property type="term" value="P:in utero embryonic development"/>
    <property type="evidence" value="ECO:0000315"/>
    <property type="project" value="MGI"/>
</dbReference>
<dbReference type="CDD" id="cd16229">
    <property type="entry name" value="EFh_CREC_RCN1"/>
    <property type="match status" value="1"/>
</dbReference>
<dbReference type="FunFam" id="1.10.238.10:FF:000109">
    <property type="entry name" value="calumenin isoform X2"/>
    <property type="match status" value="1"/>
</dbReference>
<dbReference type="FunFam" id="1.10.238.10:FF:000314">
    <property type="entry name" value="Reticulocalbin 1"/>
    <property type="match status" value="1"/>
</dbReference>
<dbReference type="FunFam" id="1.10.238.10:FF:000250">
    <property type="entry name" value="reticulocalbin-1"/>
    <property type="match status" value="1"/>
</dbReference>
<dbReference type="Gene3D" id="1.10.238.10">
    <property type="entry name" value="EF-hand"/>
    <property type="match status" value="3"/>
</dbReference>
<dbReference type="InterPro" id="IPR011992">
    <property type="entry name" value="EF-hand-dom_pair"/>
</dbReference>
<dbReference type="InterPro" id="IPR018247">
    <property type="entry name" value="EF_Hand_1_Ca_BS"/>
</dbReference>
<dbReference type="InterPro" id="IPR002048">
    <property type="entry name" value="EF_hand_dom"/>
</dbReference>
<dbReference type="InterPro" id="IPR027241">
    <property type="entry name" value="Rcn1"/>
</dbReference>
<dbReference type="PANTHER" id="PTHR10827">
    <property type="entry name" value="RETICULOCALBIN"/>
    <property type="match status" value="1"/>
</dbReference>
<dbReference type="PANTHER" id="PTHR10827:SF17">
    <property type="entry name" value="RETICULOCALBIN-1"/>
    <property type="match status" value="1"/>
</dbReference>
<dbReference type="Pfam" id="PF13202">
    <property type="entry name" value="EF-hand_5"/>
    <property type="match status" value="2"/>
</dbReference>
<dbReference type="Pfam" id="PF13499">
    <property type="entry name" value="EF-hand_7"/>
    <property type="match status" value="1"/>
</dbReference>
<dbReference type="SMART" id="SM00054">
    <property type="entry name" value="EFh"/>
    <property type="match status" value="3"/>
</dbReference>
<dbReference type="SUPFAM" id="SSF47473">
    <property type="entry name" value="EF-hand"/>
    <property type="match status" value="2"/>
</dbReference>
<dbReference type="PROSITE" id="PS00018">
    <property type="entry name" value="EF_HAND_1"/>
    <property type="match status" value="3"/>
</dbReference>
<dbReference type="PROSITE" id="PS50222">
    <property type="entry name" value="EF_HAND_2"/>
    <property type="match status" value="6"/>
</dbReference>
<dbReference type="PROSITE" id="PS00014">
    <property type="entry name" value="ER_TARGET"/>
    <property type="match status" value="1"/>
</dbReference>